<keyword id="KW-0963">Cytoplasm</keyword>
<keyword id="KW-0488">Methylation</keyword>
<keyword id="KW-0648">Protein biosynthesis</keyword>
<protein>
    <recommendedName>
        <fullName evidence="1">Peptide chain release factor 1</fullName>
        <shortName evidence="1">RF-1</shortName>
    </recommendedName>
</protein>
<feature type="chain" id="PRO_1000093526" description="Peptide chain release factor 1">
    <location>
        <begin position="1"/>
        <end position="361"/>
    </location>
</feature>
<feature type="region of interest" description="Disordered" evidence="2">
    <location>
        <begin position="283"/>
        <end position="306"/>
    </location>
</feature>
<feature type="modified residue" description="N5-methylglutamine" evidence="1">
    <location>
        <position position="235"/>
    </location>
</feature>
<dbReference type="EMBL" id="CP001011">
    <property type="protein sequence ID" value="ACB93521.1"/>
    <property type="molecule type" value="Genomic_DNA"/>
</dbReference>
<dbReference type="RefSeq" id="WP_004087401.1">
    <property type="nucleotide sequence ID" value="NC_010577.1"/>
</dbReference>
<dbReference type="SMR" id="B2IA85"/>
<dbReference type="KEGG" id="xfn:XfasM23_2123"/>
<dbReference type="HOGENOM" id="CLU_036856_0_1_6"/>
<dbReference type="Proteomes" id="UP000001698">
    <property type="component" value="Chromosome"/>
</dbReference>
<dbReference type="GO" id="GO:0005737">
    <property type="term" value="C:cytoplasm"/>
    <property type="evidence" value="ECO:0007669"/>
    <property type="project" value="UniProtKB-SubCell"/>
</dbReference>
<dbReference type="GO" id="GO:0016149">
    <property type="term" value="F:translation release factor activity, codon specific"/>
    <property type="evidence" value="ECO:0007669"/>
    <property type="project" value="UniProtKB-UniRule"/>
</dbReference>
<dbReference type="FunFam" id="3.30.160.20:FF:000004">
    <property type="entry name" value="Peptide chain release factor 1"/>
    <property type="match status" value="1"/>
</dbReference>
<dbReference type="FunFam" id="3.30.70.1660:FF:000002">
    <property type="entry name" value="Peptide chain release factor 1"/>
    <property type="match status" value="1"/>
</dbReference>
<dbReference type="FunFam" id="3.30.70.1660:FF:000004">
    <property type="entry name" value="Peptide chain release factor 1"/>
    <property type="match status" value="1"/>
</dbReference>
<dbReference type="Gene3D" id="3.30.160.20">
    <property type="match status" value="1"/>
</dbReference>
<dbReference type="Gene3D" id="3.30.70.1660">
    <property type="match status" value="2"/>
</dbReference>
<dbReference type="Gene3D" id="6.10.140.1950">
    <property type="match status" value="1"/>
</dbReference>
<dbReference type="HAMAP" id="MF_00093">
    <property type="entry name" value="Rel_fac_1"/>
    <property type="match status" value="1"/>
</dbReference>
<dbReference type="InterPro" id="IPR005139">
    <property type="entry name" value="PCRF"/>
</dbReference>
<dbReference type="InterPro" id="IPR000352">
    <property type="entry name" value="Pep_chain_release_fac_I"/>
</dbReference>
<dbReference type="InterPro" id="IPR045853">
    <property type="entry name" value="Pep_chain_release_fac_I_sf"/>
</dbReference>
<dbReference type="InterPro" id="IPR050057">
    <property type="entry name" value="Prokaryotic/Mito_RF"/>
</dbReference>
<dbReference type="InterPro" id="IPR004373">
    <property type="entry name" value="RF-1"/>
</dbReference>
<dbReference type="NCBIfam" id="TIGR00019">
    <property type="entry name" value="prfA"/>
    <property type="match status" value="1"/>
</dbReference>
<dbReference type="NCBIfam" id="NF001859">
    <property type="entry name" value="PRK00591.1"/>
    <property type="match status" value="1"/>
</dbReference>
<dbReference type="PANTHER" id="PTHR43804">
    <property type="entry name" value="LD18447P"/>
    <property type="match status" value="1"/>
</dbReference>
<dbReference type="PANTHER" id="PTHR43804:SF7">
    <property type="entry name" value="LD18447P"/>
    <property type="match status" value="1"/>
</dbReference>
<dbReference type="Pfam" id="PF03462">
    <property type="entry name" value="PCRF"/>
    <property type="match status" value="1"/>
</dbReference>
<dbReference type="Pfam" id="PF00472">
    <property type="entry name" value="RF-1"/>
    <property type="match status" value="1"/>
</dbReference>
<dbReference type="SMART" id="SM00937">
    <property type="entry name" value="PCRF"/>
    <property type="match status" value="1"/>
</dbReference>
<dbReference type="SUPFAM" id="SSF75620">
    <property type="entry name" value="Release factor"/>
    <property type="match status" value="1"/>
</dbReference>
<dbReference type="PROSITE" id="PS00745">
    <property type="entry name" value="RF_PROK_I"/>
    <property type="match status" value="1"/>
</dbReference>
<reference key="1">
    <citation type="journal article" date="2010" name="J. Bacteriol.">
        <title>Whole genome sequences of two Xylella fastidiosa strains (M12 and M23) causing almond leaf scorch disease in California.</title>
        <authorList>
            <person name="Chen J."/>
            <person name="Xie G."/>
            <person name="Han S."/>
            <person name="Chertkov O."/>
            <person name="Sims D."/>
            <person name="Civerolo E.L."/>
        </authorList>
    </citation>
    <scope>NUCLEOTIDE SEQUENCE [LARGE SCALE GENOMIC DNA]</scope>
    <source>
        <strain>M23</strain>
    </source>
</reference>
<gene>
    <name evidence="1" type="primary">prfA</name>
    <name type="ordered locus">XfasM23_2123</name>
</gene>
<organism>
    <name type="scientific">Xylella fastidiosa (strain M23)</name>
    <dbReference type="NCBI Taxonomy" id="405441"/>
    <lineage>
        <taxon>Bacteria</taxon>
        <taxon>Pseudomonadati</taxon>
        <taxon>Pseudomonadota</taxon>
        <taxon>Gammaproteobacteria</taxon>
        <taxon>Lysobacterales</taxon>
        <taxon>Lysobacteraceae</taxon>
        <taxon>Xylella</taxon>
    </lineage>
</organism>
<sequence>MKPTLRRKLEALAERHEELERLLSDPKIASDTDRFRTYSRELAQLAPIATTLAEETRTKADLAAAETLRTDPEMRELAEQEIAIAQAHLTTLDEQLQRLLIPQDPRDECNLFLEVRAGTGGDEAAIFAGNLFRMYTRYAERQRWKVEVESDTPGEHGGYKEIIARIVGRGAYSRLKFESGTHRVQRVPATESQGRIHTSAATVAIIPEADEIADISINPADLKIDTFRSSGAGGQHVNKTESAIRITHLPTGVVVESQTERSQHANRDKAMKRLKAQLIESQRSQQATAEAMTRKLQVGSGDRSQRIRTYNFPQGRITDHRVENLTLYDLPNIIEGDLDPLIDRLRQEHQAEELARLSNAP</sequence>
<comment type="function">
    <text evidence="1">Peptide chain release factor 1 directs the termination of translation in response to the peptide chain termination codons UAG and UAA.</text>
</comment>
<comment type="subcellular location">
    <subcellularLocation>
        <location evidence="1">Cytoplasm</location>
    </subcellularLocation>
</comment>
<comment type="PTM">
    <text evidence="1">Methylated by PrmC. Methylation increases the termination efficiency of RF1.</text>
</comment>
<comment type="similarity">
    <text evidence="1">Belongs to the prokaryotic/mitochondrial release factor family.</text>
</comment>
<accession>B2IA85</accession>
<name>RF1_XYLF2</name>
<proteinExistence type="inferred from homology"/>
<evidence type="ECO:0000255" key="1">
    <source>
        <dbReference type="HAMAP-Rule" id="MF_00093"/>
    </source>
</evidence>
<evidence type="ECO:0000256" key="2">
    <source>
        <dbReference type="SAM" id="MobiDB-lite"/>
    </source>
</evidence>